<evidence type="ECO:0000255" key="1">
    <source>
        <dbReference type="HAMAP-Rule" id="MF_00784"/>
    </source>
</evidence>
<accession>B8DAL8</accession>
<dbReference type="EC" id="3.4.-.-" evidence="1"/>
<dbReference type="EMBL" id="CP001175">
    <property type="protein sequence ID" value="ACK40957.1"/>
    <property type="molecule type" value="Genomic_DNA"/>
</dbReference>
<dbReference type="RefSeq" id="WP_003728981.1">
    <property type="nucleotide sequence ID" value="NC_011660.1"/>
</dbReference>
<dbReference type="KEGG" id="lmh:LMHCC_2622"/>
<dbReference type="HOGENOM" id="CLU_098969_2_2_9"/>
<dbReference type="GO" id="GO:0005886">
    <property type="term" value="C:plasma membrane"/>
    <property type="evidence" value="ECO:0007669"/>
    <property type="project" value="UniProtKB-SubCell"/>
</dbReference>
<dbReference type="GO" id="GO:0008233">
    <property type="term" value="F:peptidase activity"/>
    <property type="evidence" value="ECO:0007669"/>
    <property type="project" value="UniProtKB-UniRule"/>
</dbReference>
<dbReference type="GO" id="GO:0006508">
    <property type="term" value="P:proteolysis"/>
    <property type="evidence" value="ECO:0007669"/>
    <property type="project" value="UniProtKB-KW"/>
</dbReference>
<dbReference type="GO" id="GO:0009372">
    <property type="term" value="P:quorum sensing"/>
    <property type="evidence" value="ECO:0007669"/>
    <property type="project" value="UniProtKB-UniRule"/>
</dbReference>
<dbReference type="HAMAP" id="MF_00784">
    <property type="entry name" value="AgrB"/>
    <property type="match status" value="1"/>
</dbReference>
<dbReference type="InterPro" id="IPR006741">
    <property type="entry name" value="AgrB"/>
</dbReference>
<dbReference type="NCBIfam" id="NF002210">
    <property type="entry name" value="PRK01100.1"/>
    <property type="match status" value="1"/>
</dbReference>
<dbReference type="Pfam" id="PF04647">
    <property type="entry name" value="AgrB"/>
    <property type="match status" value="1"/>
</dbReference>
<dbReference type="SMART" id="SM00793">
    <property type="entry name" value="AgrB"/>
    <property type="match status" value="1"/>
</dbReference>
<comment type="function">
    <text evidence="1">May be involved in the proteolytic processing of a quorum sensing system signal molecule precursor.</text>
</comment>
<comment type="subcellular location">
    <subcellularLocation>
        <location evidence="1">Cell membrane</location>
        <topology evidence="1">Multi-pass membrane protein</topology>
    </subcellularLocation>
</comment>
<comment type="similarity">
    <text evidence="1">Belongs to the AgrB family.</text>
</comment>
<protein>
    <recommendedName>
        <fullName evidence="1">Putative AgrB-like protein</fullName>
        <ecNumber evidence="1">3.4.-.-</ecNumber>
    </recommendedName>
</protein>
<proteinExistence type="inferred from homology"/>
<keyword id="KW-1003">Cell membrane</keyword>
<keyword id="KW-0378">Hydrolase</keyword>
<keyword id="KW-0472">Membrane</keyword>
<keyword id="KW-0645">Protease</keyword>
<keyword id="KW-0673">Quorum sensing</keyword>
<keyword id="KW-0812">Transmembrane</keyword>
<keyword id="KW-1133">Transmembrane helix</keyword>
<feature type="chain" id="PRO_1000148473" description="Putative AgrB-like protein">
    <location>
        <begin position="1"/>
        <end position="204"/>
    </location>
</feature>
<feature type="transmembrane region" description="Helical" evidence="1">
    <location>
        <begin position="52"/>
        <end position="74"/>
    </location>
</feature>
<feature type="transmembrane region" description="Helical" evidence="1">
    <location>
        <begin position="87"/>
        <end position="107"/>
    </location>
</feature>
<feature type="transmembrane region" description="Helical" evidence="1">
    <location>
        <begin position="111"/>
        <end position="131"/>
    </location>
</feature>
<feature type="transmembrane region" description="Helical" evidence="1">
    <location>
        <begin position="156"/>
        <end position="176"/>
    </location>
</feature>
<reference key="1">
    <citation type="journal article" date="2011" name="J. Bacteriol.">
        <title>Genome sequence of lineage III Listeria monocytogenes strain HCC23.</title>
        <authorList>
            <person name="Steele C.L."/>
            <person name="Donaldson J.R."/>
            <person name="Paul D."/>
            <person name="Banes M.M."/>
            <person name="Arick T."/>
            <person name="Bridges S.M."/>
            <person name="Lawrence M.L."/>
        </authorList>
    </citation>
    <scope>NUCLEOTIDE SEQUENCE [LARGE SCALE GENOMIC DNA]</scope>
    <source>
        <strain>HCC23</strain>
    </source>
</reference>
<sequence>MSNFTAKVPLSERMADVLISKDRWKDDEEGYLKVKYGLEIILINVMKFALVYGIALVTGLLLQTVTVHLSYLWLRRYSFGLHATKTLNCTLISLMMFVLAPFVFQNVPSNNWIVLGTFAFILLNMFLFAPADTESLPLIGEEHRKTLKRKAMIGTLILTGIALLIPFAEMKTLIMIGSLFQVISINPLTYKLLRRRYRNYEKYE</sequence>
<organism>
    <name type="scientific">Listeria monocytogenes serotype 4a (strain HCC23)</name>
    <dbReference type="NCBI Taxonomy" id="552536"/>
    <lineage>
        <taxon>Bacteria</taxon>
        <taxon>Bacillati</taxon>
        <taxon>Bacillota</taxon>
        <taxon>Bacilli</taxon>
        <taxon>Bacillales</taxon>
        <taxon>Listeriaceae</taxon>
        <taxon>Listeria</taxon>
    </lineage>
</organism>
<gene>
    <name type="ordered locus">LMHCC_2622</name>
</gene>
<name>AGRB_LISMH</name>